<protein>
    <recommendedName>
        <fullName evidence="1">Large ribosomal subunit protein uL15</fullName>
    </recommendedName>
    <alternativeName>
        <fullName evidence="3">50S ribosomal protein L15</fullName>
    </alternativeName>
</protein>
<feature type="chain" id="PRO_1000142795" description="Large ribosomal subunit protein uL15">
    <location>
        <begin position="1"/>
        <end position="146"/>
    </location>
</feature>
<feature type="region of interest" description="Disordered" evidence="2">
    <location>
        <begin position="1"/>
        <end position="54"/>
    </location>
</feature>
<feature type="compositionally biased region" description="Gly residues" evidence="2">
    <location>
        <begin position="21"/>
        <end position="31"/>
    </location>
</feature>
<feature type="compositionally biased region" description="Gly residues" evidence="2">
    <location>
        <begin position="42"/>
        <end position="52"/>
    </location>
</feature>
<keyword id="KW-0687">Ribonucleoprotein</keyword>
<keyword id="KW-0689">Ribosomal protein</keyword>
<keyword id="KW-0694">RNA-binding</keyword>
<keyword id="KW-0699">rRNA-binding</keyword>
<proteinExistence type="inferred from homology"/>
<reference key="1">
    <citation type="submission" date="2008-04" db="EMBL/GenBank/DDBJ databases">
        <title>Complete sequence of Clostridium botulinum strain Eklund.</title>
        <authorList>
            <person name="Brinkac L.M."/>
            <person name="Brown J.L."/>
            <person name="Bruce D."/>
            <person name="Detter C."/>
            <person name="Munk C."/>
            <person name="Smith L.A."/>
            <person name="Smith T.J."/>
            <person name="Sutton G."/>
            <person name="Brettin T.S."/>
        </authorList>
    </citation>
    <scope>NUCLEOTIDE SEQUENCE [LARGE SCALE GENOMIC DNA]</scope>
    <source>
        <strain>Eklund 17B / Type B</strain>
    </source>
</reference>
<accession>B2TIJ4</accession>
<gene>
    <name evidence="1" type="primary">rplO</name>
    <name type="ordered locus">CLL_A0257</name>
</gene>
<organism>
    <name type="scientific">Clostridium botulinum (strain Eklund 17B / Type B)</name>
    <dbReference type="NCBI Taxonomy" id="935198"/>
    <lineage>
        <taxon>Bacteria</taxon>
        <taxon>Bacillati</taxon>
        <taxon>Bacillota</taxon>
        <taxon>Clostridia</taxon>
        <taxon>Eubacteriales</taxon>
        <taxon>Clostridiaceae</taxon>
        <taxon>Clostridium</taxon>
    </lineage>
</organism>
<sequence>MKLHELQPAAGSRKAPKRVGRGTGSGLGRNAGKGEKGQNARSGGGVRPGFEGGQMPLYRRLPKRGFTNIFAKRYVSINVDRLNIFENGTEITPEVLLERRVVSKVLDGVKILGNGNLEKSLIVKGCKFSKSAIEKIEAAGGKVEVI</sequence>
<evidence type="ECO:0000255" key="1">
    <source>
        <dbReference type="HAMAP-Rule" id="MF_01341"/>
    </source>
</evidence>
<evidence type="ECO:0000256" key="2">
    <source>
        <dbReference type="SAM" id="MobiDB-lite"/>
    </source>
</evidence>
<evidence type="ECO:0000305" key="3"/>
<comment type="function">
    <text evidence="1">Binds to the 23S rRNA.</text>
</comment>
<comment type="subunit">
    <text evidence="1">Part of the 50S ribosomal subunit.</text>
</comment>
<comment type="similarity">
    <text evidence="1">Belongs to the universal ribosomal protein uL15 family.</text>
</comment>
<dbReference type="EMBL" id="CP001056">
    <property type="protein sequence ID" value="ACD22017.1"/>
    <property type="molecule type" value="Genomic_DNA"/>
</dbReference>
<dbReference type="SMR" id="B2TIJ4"/>
<dbReference type="KEGG" id="cbk:CLL_A0257"/>
<dbReference type="PATRIC" id="fig|935198.13.peg.232"/>
<dbReference type="HOGENOM" id="CLU_055188_4_2_9"/>
<dbReference type="Proteomes" id="UP000001195">
    <property type="component" value="Chromosome"/>
</dbReference>
<dbReference type="GO" id="GO:0022625">
    <property type="term" value="C:cytosolic large ribosomal subunit"/>
    <property type="evidence" value="ECO:0007669"/>
    <property type="project" value="TreeGrafter"/>
</dbReference>
<dbReference type="GO" id="GO:0019843">
    <property type="term" value="F:rRNA binding"/>
    <property type="evidence" value="ECO:0007669"/>
    <property type="project" value="UniProtKB-UniRule"/>
</dbReference>
<dbReference type="GO" id="GO:0003735">
    <property type="term" value="F:structural constituent of ribosome"/>
    <property type="evidence" value="ECO:0007669"/>
    <property type="project" value="InterPro"/>
</dbReference>
<dbReference type="GO" id="GO:0006412">
    <property type="term" value="P:translation"/>
    <property type="evidence" value="ECO:0007669"/>
    <property type="project" value="UniProtKB-UniRule"/>
</dbReference>
<dbReference type="Gene3D" id="3.100.10.10">
    <property type="match status" value="1"/>
</dbReference>
<dbReference type="HAMAP" id="MF_01341">
    <property type="entry name" value="Ribosomal_uL15"/>
    <property type="match status" value="1"/>
</dbReference>
<dbReference type="InterPro" id="IPR030878">
    <property type="entry name" value="Ribosomal_uL15"/>
</dbReference>
<dbReference type="InterPro" id="IPR021131">
    <property type="entry name" value="Ribosomal_uL15/eL18"/>
</dbReference>
<dbReference type="InterPro" id="IPR036227">
    <property type="entry name" value="Ribosomal_uL15/eL18_sf"/>
</dbReference>
<dbReference type="InterPro" id="IPR005749">
    <property type="entry name" value="Ribosomal_uL15_bac-type"/>
</dbReference>
<dbReference type="InterPro" id="IPR001196">
    <property type="entry name" value="Ribosomal_uL15_CS"/>
</dbReference>
<dbReference type="NCBIfam" id="TIGR01071">
    <property type="entry name" value="rplO_bact"/>
    <property type="match status" value="1"/>
</dbReference>
<dbReference type="PANTHER" id="PTHR12934">
    <property type="entry name" value="50S RIBOSOMAL PROTEIN L15"/>
    <property type="match status" value="1"/>
</dbReference>
<dbReference type="PANTHER" id="PTHR12934:SF11">
    <property type="entry name" value="LARGE RIBOSOMAL SUBUNIT PROTEIN UL15M"/>
    <property type="match status" value="1"/>
</dbReference>
<dbReference type="Pfam" id="PF00828">
    <property type="entry name" value="Ribosomal_L27A"/>
    <property type="match status" value="1"/>
</dbReference>
<dbReference type="SUPFAM" id="SSF52080">
    <property type="entry name" value="Ribosomal proteins L15p and L18e"/>
    <property type="match status" value="1"/>
</dbReference>
<dbReference type="PROSITE" id="PS00475">
    <property type="entry name" value="RIBOSOMAL_L15"/>
    <property type="match status" value="1"/>
</dbReference>
<name>RL15_CLOBB</name>